<gene>
    <name evidence="1" type="primary">rimM</name>
    <name type="ordered locus">PBPRA3040</name>
</gene>
<dbReference type="EMBL" id="CR378672">
    <property type="protein sequence ID" value="CAG21368.1"/>
    <property type="molecule type" value="Genomic_DNA"/>
</dbReference>
<dbReference type="RefSeq" id="WP_011219629.1">
    <property type="nucleotide sequence ID" value="NC_006370.1"/>
</dbReference>
<dbReference type="SMR" id="Q6LMV8"/>
<dbReference type="STRING" id="298386.PBPRA3040"/>
<dbReference type="KEGG" id="ppr:PBPRA3040"/>
<dbReference type="eggNOG" id="COG0806">
    <property type="taxonomic scope" value="Bacteria"/>
</dbReference>
<dbReference type="HOGENOM" id="CLU_077636_1_0_6"/>
<dbReference type="Proteomes" id="UP000000593">
    <property type="component" value="Chromosome 1"/>
</dbReference>
<dbReference type="GO" id="GO:0005737">
    <property type="term" value="C:cytoplasm"/>
    <property type="evidence" value="ECO:0007669"/>
    <property type="project" value="UniProtKB-SubCell"/>
</dbReference>
<dbReference type="GO" id="GO:0005840">
    <property type="term" value="C:ribosome"/>
    <property type="evidence" value="ECO:0007669"/>
    <property type="project" value="InterPro"/>
</dbReference>
<dbReference type="GO" id="GO:0043022">
    <property type="term" value="F:ribosome binding"/>
    <property type="evidence" value="ECO:0007669"/>
    <property type="project" value="InterPro"/>
</dbReference>
<dbReference type="GO" id="GO:0042274">
    <property type="term" value="P:ribosomal small subunit biogenesis"/>
    <property type="evidence" value="ECO:0007669"/>
    <property type="project" value="UniProtKB-UniRule"/>
</dbReference>
<dbReference type="GO" id="GO:0006364">
    <property type="term" value="P:rRNA processing"/>
    <property type="evidence" value="ECO:0007669"/>
    <property type="project" value="UniProtKB-UniRule"/>
</dbReference>
<dbReference type="Gene3D" id="2.30.30.240">
    <property type="entry name" value="PRC-barrel domain"/>
    <property type="match status" value="1"/>
</dbReference>
<dbReference type="Gene3D" id="2.40.30.60">
    <property type="entry name" value="RimM"/>
    <property type="match status" value="1"/>
</dbReference>
<dbReference type="HAMAP" id="MF_00014">
    <property type="entry name" value="Ribosome_mat_RimM"/>
    <property type="match status" value="1"/>
</dbReference>
<dbReference type="InterPro" id="IPR027275">
    <property type="entry name" value="PRC-brl_dom"/>
</dbReference>
<dbReference type="InterPro" id="IPR011033">
    <property type="entry name" value="PRC_barrel-like_sf"/>
</dbReference>
<dbReference type="InterPro" id="IPR011961">
    <property type="entry name" value="RimM"/>
</dbReference>
<dbReference type="InterPro" id="IPR002676">
    <property type="entry name" value="RimM_N"/>
</dbReference>
<dbReference type="InterPro" id="IPR036976">
    <property type="entry name" value="RimM_N_sf"/>
</dbReference>
<dbReference type="InterPro" id="IPR009000">
    <property type="entry name" value="Transl_B-barrel_sf"/>
</dbReference>
<dbReference type="NCBIfam" id="TIGR02273">
    <property type="entry name" value="16S_RimM"/>
    <property type="match status" value="1"/>
</dbReference>
<dbReference type="PANTHER" id="PTHR33692">
    <property type="entry name" value="RIBOSOME MATURATION FACTOR RIMM"/>
    <property type="match status" value="1"/>
</dbReference>
<dbReference type="PANTHER" id="PTHR33692:SF1">
    <property type="entry name" value="RIBOSOME MATURATION FACTOR RIMM"/>
    <property type="match status" value="1"/>
</dbReference>
<dbReference type="Pfam" id="PF05239">
    <property type="entry name" value="PRC"/>
    <property type="match status" value="1"/>
</dbReference>
<dbReference type="Pfam" id="PF01782">
    <property type="entry name" value="RimM"/>
    <property type="match status" value="1"/>
</dbReference>
<dbReference type="SUPFAM" id="SSF50346">
    <property type="entry name" value="PRC-barrel domain"/>
    <property type="match status" value="1"/>
</dbReference>
<dbReference type="SUPFAM" id="SSF50447">
    <property type="entry name" value="Translation proteins"/>
    <property type="match status" value="1"/>
</dbReference>
<feature type="chain" id="PRO_0000163329" description="Ribosome maturation factor RimM">
    <location>
        <begin position="1"/>
        <end position="177"/>
    </location>
</feature>
<feature type="domain" description="PRC barrel" evidence="1">
    <location>
        <begin position="98"/>
        <end position="177"/>
    </location>
</feature>
<comment type="function">
    <text evidence="1">An accessory protein needed during the final step in the assembly of 30S ribosomal subunit, possibly for assembly of the head region. Essential for efficient processing of 16S rRNA. May be needed both before and after RbfA during the maturation of 16S rRNA. It has affinity for free ribosomal 30S subunits but not for 70S ribosomes.</text>
</comment>
<comment type="subunit">
    <text evidence="1">Binds ribosomal protein uS19.</text>
</comment>
<comment type="subcellular location">
    <subcellularLocation>
        <location evidence="1">Cytoplasm</location>
    </subcellularLocation>
</comment>
<comment type="domain">
    <text evidence="1">The PRC barrel domain binds ribosomal protein uS19.</text>
</comment>
<comment type="similarity">
    <text evidence="1">Belongs to the RimM family.</text>
</comment>
<sequence length="177" mass="20016">MSSQNQDLVVVGKLGATYGIKGWLKVFSYTEQSESIFAYQPWLIKVKGEWKPIQIESWKKHGQGMVAKLEGLDIREDAQIFTNAEVAVHADQLPALSGEEFYWRELYGMSVVTTEGYDLGKVTDILETGSNDVLVVKANLKDAFGQKERLIPFLDEQVIKSIDRTAQRIEVDWDPGF</sequence>
<accession>Q6LMV8</accession>
<evidence type="ECO:0000255" key="1">
    <source>
        <dbReference type="HAMAP-Rule" id="MF_00014"/>
    </source>
</evidence>
<keyword id="KW-0143">Chaperone</keyword>
<keyword id="KW-0963">Cytoplasm</keyword>
<keyword id="KW-1185">Reference proteome</keyword>
<keyword id="KW-0690">Ribosome biogenesis</keyword>
<keyword id="KW-0698">rRNA processing</keyword>
<reference key="1">
    <citation type="journal article" date="2005" name="Science">
        <title>Life at depth: Photobacterium profundum genome sequence and expression analysis.</title>
        <authorList>
            <person name="Vezzi A."/>
            <person name="Campanaro S."/>
            <person name="D'Angelo M."/>
            <person name="Simonato F."/>
            <person name="Vitulo N."/>
            <person name="Lauro F.M."/>
            <person name="Cestaro A."/>
            <person name="Malacrida G."/>
            <person name="Simionati B."/>
            <person name="Cannata N."/>
            <person name="Romualdi C."/>
            <person name="Bartlett D.H."/>
            <person name="Valle G."/>
        </authorList>
    </citation>
    <scope>NUCLEOTIDE SEQUENCE [LARGE SCALE GENOMIC DNA]</scope>
    <source>
        <strain>ATCC BAA-1253 / SS9</strain>
    </source>
</reference>
<protein>
    <recommendedName>
        <fullName evidence="1">Ribosome maturation factor RimM</fullName>
    </recommendedName>
</protein>
<organism>
    <name type="scientific">Photobacterium profundum (strain SS9)</name>
    <dbReference type="NCBI Taxonomy" id="298386"/>
    <lineage>
        <taxon>Bacteria</taxon>
        <taxon>Pseudomonadati</taxon>
        <taxon>Pseudomonadota</taxon>
        <taxon>Gammaproteobacteria</taxon>
        <taxon>Vibrionales</taxon>
        <taxon>Vibrionaceae</taxon>
        <taxon>Photobacterium</taxon>
    </lineage>
</organism>
<name>RIMM_PHOPR</name>
<proteinExistence type="inferred from homology"/>